<dbReference type="EC" id="3.4.19.12"/>
<dbReference type="EMBL" id="AC002397">
    <property type="protein sequence ID" value="AAC36015.1"/>
    <property type="molecule type" value="Genomic_DNA"/>
</dbReference>
<dbReference type="EMBL" id="BC066993">
    <property type="protein sequence ID" value="AAH66993.1"/>
    <property type="molecule type" value="mRNA"/>
</dbReference>
<dbReference type="CCDS" id="CCDS20531.1"/>
<dbReference type="RefSeq" id="NP_001313523.1">
    <property type="nucleotide sequence ID" value="NM_001326594.1"/>
</dbReference>
<dbReference type="RefSeq" id="NP_038728.1">
    <property type="nucleotide sequence ID" value="NM_013700.3"/>
</dbReference>
<dbReference type="SMR" id="P56399"/>
<dbReference type="BioGRID" id="204425">
    <property type="interactions" value="31"/>
</dbReference>
<dbReference type="FunCoup" id="P56399">
    <property type="interactions" value="4310"/>
</dbReference>
<dbReference type="IntAct" id="P56399">
    <property type="interactions" value="1"/>
</dbReference>
<dbReference type="MINT" id="P56399"/>
<dbReference type="STRING" id="10090.ENSMUSP00000041299"/>
<dbReference type="MEROPS" id="C19.001"/>
<dbReference type="GlyGen" id="P56399">
    <property type="glycosylation" value="1 site, 1 O-linked glycan (1 site)"/>
</dbReference>
<dbReference type="iPTMnet" id="P56399"/>
<dbReference type="PhosphoSitePlus" id="P56399"/>
<dbReference type="SwissPalm" id="P56399"/>
<dbReference type="jPOST" id="P56399"/>
<dbReference type="PaxDb" id="10090-ENSMUSP00000041299"/>
<dbReference type="PeptideAtlas" id="P56399"/>
<dbReference type="ProteomicsDB" id="297710"/>
<dbReference type="Pumba" id="P56399"/>
<dbReference type="Antibodypedia" id="1723">
    <property type="antibodies" value="395 antibodies from 31 providers"/>
</dbReference>
<dbReference type="DNASU" id="22225"/>
<dbReference type="Ensembl" id="ENSMUST00000047510.10">
    <property type="protein sequence ID" value="ENSMUSP00000041299.4"/>
    <property type="gene ID" value="ENSMUSG00000038429.11"/>
</dbReference>
<dbReference type="GeneID" id="22225"/>
<dbReference type="KEGG" id="mmu:22225"/>
<dbReference type="UCSC" id="uc009dsa.1">
    <property type="organism name" value="mouse"/>
</dbReference>
<dbReference type="AGR" id="MGI:1347343"/>
<dbReference type="CTD" id="8078"/>
<dbReference type="MGI" id="MGI:1347343">
    <property type="gene designation" value="Usp5"/>
</dbReference>
<dbReference type="VEuPathDB" id="HostDB:ENSMUSG00000038429"/>
<dbReference type="eggNOG" id="KOG0944">
    <property type="taxonomic scope" value="Eukaryota"/>
</dbReference>
<dbReference type="GeneTree" id="ENSGT00940000156036"/>
<dbReference type="InParanoid" id="P56399"/>
<dbReference type="OMA" id="FVPCEHT"/>
<dbReference type="OrthoDB" id="361536at2759"/>
<dbReference type="PhylomeDB" id="P56399"/>
<dbReference type="TreeFam" id="TF300576"/>
<dbReference type="Reactome" id="R-MMU-5689880">
    <property type="pathway name" value="Ub-specific processing proteases"/>
</dbReference>
<dbReference type="Reactome" id="R-MMU-8866652">
    <property type="pathway name" value="Synthesis of active ubiquitin: roles of E1 and E2 enzymes"/>
</dbReference>
<dbReference type="BioGRID-ORCS" id="22225">
    <property type="hits" value="24 hits in 78 CRISPR screens"/>
</dbReference>
<dbReference type="CD-CODE" id="CE726F99">
    <property type="entry name" value="Postsynaptic density"/>
</dbReference>
<dbReference type="ChiTaRS" id="Usp5">
    <property type="organism name" value="mouse"/>
</dbReference>
<dbReference type="PRO" id="PR:P56399"/>
<dbReference type="Proteomes" id="UP000000589">
    <property type="component" value="Chromosome 6"/>
</dbReference>
<dbReference type="RNAct" id="P56399">
    <property type="molecule type" value="protein"/>
</dbReference>
<dbReference type="Bgee" id="ENSMUSG00000038429">
    <property type="expression patterns" value="Expressed in spermatocyte and 256 other cell types or tissues"/>
</dbReference>
<dbReference type="ExpressionAtlas" id="P56399">
    <property type="expression patterns" value="baseline and differential"/>
</dbReference>
<dbReference type="GO" id="GO:0098793">
    <property type="term" value="C:presynapse"/>
    <property type="evidence" value="ECO:0007669"/>
    <property type="project" value="GOC"/>
</dbReference>
<dbReference type="GO" id="GO:0004843">
    <property type="term" value="F:cysteine-type deubiquitinase activity"/>
    <property type="evidence" value="ECO:0007669"/>
    <property type="project" value="UniProtKB-EC"/>
</dbReference>
<dbReference type="GO" id="GO:0043130">
    <property type="term" value="F:ubiquitin binding"/>
    <property type="evidence" value="ECO:0007669"/>
    <property type="project" value="Ensembl"/>
</dbReference>
<dbReference type="GO" id="GO:0008270">
    <property type="term" value="F:zinc ion binding"/>
    <property type="evidence" value="ECO:0007669"/>
    <property type="project" value="UniProtKB-KW"/>
</dbReference>
<dbReference type="GO" id="GO:2000059">
    <property type="term" value="P:negative regulation of ubiquitin-dependent protein catabolic process"/>
    <property type="evidence" value="ECO:0007669"/>
    <property type="project" value="Ensembl"/>
</dbReference>
<dbReference type="GO" id="GO:0032436">
    <property type="term" value="P:positive regulation of proteasomal ubiquitin-dependent protein catabolic process"/>
    <property type="evidence" value="ECO:0007669"/>
    <property type="project" value="Ensembl"/>
</dbReference>
<dbReference type="GO" id="GO:0071108">
    <property type="term" value="P:protein K48-linked deubiquitination"/>
    <property type="evidence" value="ECO:0007669"/>
    <property type="project" value="Ensembl"/>
</dbReference>
<dbReference type="GO" id="GO:0006508">
    <property type="term" value="P:proteolysis"/>
    <property type="evidence" value="ECO:0007669"/>
    <property type="project" value="UniProtKB-KW"/>
</dbReference>
<dbReference type="GO" id="GO:0140251">
    <property type="term" value="P:regulation protein catabolic process at presynapse"/>
    <property type="evidence" value="ECO:0000314"/>
    <property type="project" value="SynGO"/>
</dbReference>
<dbReference type="CDD" id="cd02658">
    <property type="entry name" value="Peptidase_C19B"/>
    <property type="match status" value="1"/>
</dbReference>
<dbReference type="CDD" id="cd14383">
    <property type="entry name" value="UBA1_UBP5"/>
    <property type="match status" value="1"/>
</dbReference>
<dbReference type="CDD" id="cd14386">
    <property type="entry name" value="UBA2_UBP5"/>
    <property type="match status" value="1"/>
</dbReference>
<dbReference type="FunFam" id="1.10.8.10:FF:000016">
    <property type="entry name" value="Ubiquitin carboxyl-terminal hydrolase"/>
    <property type="match status" value="1"/>
</dbReference>
<dbReference type="FunFam" id="1.10.8.10:FF:000087">
    <property type="entry name" value="Ubiquitin carboxyl-terminal hydrolase"/>
    <property type="match status" value="1"/>
</dbReference>
<dbReference type="FunFam" id="3.30.40.10:FF:000026">
    <property type="entry name" value="Ubiquitin carboxyl-terminal hydrolase"/>
    <property type="match status" value="1"/>
</dbReference>
<dbReference type="FunFam" id="3.30.40.10:FF:000256">
    <property type="entry name" value="Ubiquitin carboxyl-terminal hydrolase"/>
    <property type="match status" value="1"/>
</dbReference>
<dbReference type="FunFam" id="3.90.70.10:FF:000033">
    <property type="entry name" value="Ubiquitin carboxyl-terminal hydrolase"/>
    <property type="match status" value="1"/>
</dbReference>
<dbReference type="FunFam" id="3.90.70.10:FF:000042">
    <property type="entry name" value="Ubiquitin carboxyl-terminal hydrolase"/>
    <property type="match status" value="1"/>
</dbReference>
<dbReference type="Gene3D" id="3.90.70.10">
    <property type="entry name" value="Cysteine proteinases"/>
    <property type="match status" value="2"/>
</dbReference>
<dbReference type="Gene3D" id="1.10.8.10">
    <property type="entry name" value="DNA helicase RuvA subunit, C-terminal domain"/>
    <property type="match status" value="2"/>
</dbReference>
<dbReference type="Gene3D" id="3.30.40.10">
    <property type="entry name" value="Zinc/RING finger domain, C3HC4 (zinc finger)"/>
    <property type="match status" value="3"/>
</dbReference>
<dbReference type="InterPro" id="IPR038765">
    <property type="entry name" value="Papain-like_cys_pep_sf"/>
</dbReference>
<dbReference type="InterPro" id="IPR001394">
    <property type="entry name" value="Peptidase_C19_UCH"/>
</dbReference>
<dbReference type="InterPro" id="IPR050185">
    <property type="entry name" value="Ub_carboxyl-term_hydrolase"/>
</dbReference>
<dbReference type="InterPro" id="IPR015940">
    <property type="entry name" value="UBA"/>
</dbReference>
<dbReference type="InterPro" id="IPR009060">
    <property type="entry name" value="UBA-like_sf"/>
</dbReference>
<dbReference type="InterPro" id="IPR016652">
    <property type="entry name" value="Ubiquitinyl_hydrolase"/>
</dbReference>
<dbReference type="InterPro" id="IPR041432">
    <property type="entry name" value="UBP13_Znf-UBP_var"/>
</dbReference>
<dbReference type="InterPro" id="IPR041812">
    <property type="entry name" value="UBP5_UBA1"/>
</dbReference>
<dbReference type="InterPro" id="IPR018200">
    <property type="entry name" value="USP_CS"/>
</dbReference>
<dbReference type="InterPro" id="IPR028889">
    <property type="entry name" value="USP_dom"/>
</dbReference>
<dbReference type="InterPro" id="IPR013083">
    <property type="entry name" value="Znf_RING/FYVE/PHD"/>
</dbReference>
<dbReference type="InterPro" id="IPR001607">
    <property type="entry name" value="Znf_UBP"/>
</dbReference>
<dbReference type="PANTHER" id="PTHR21646">
    <property type="entry name" value="UBIQUITIN CARBOXYL-TERMINAL HYDROLASE"/>
    <property type="match status" value="1"/>
</dbReference>
<dbReference type="PANTHER" id="PTHR21646:SF103">
    <property type="entry name" value="UBIQUITIN CARBOXYL-TERMINAL HYDROLASE"/>
    <property type="match status" value="1"/>
</dbReference>
<dbReference type="Pfam" id="PF22562">
    <property type="entry name" value="UBA_7"/>
    <property type="match status" value="2"/>
</dbReference>
<dbReference type="Pfam" id="PF00443">
    <property type="entry name" value="UCH"/>
    <property type="match status" value="1"/>
</dbReference>
<dbReference type="Pfam" id="PF02148">
    <property type="entry name" value="zf-UBP"/>
    <property type="match status" value="1"/>
</dbReference>
<dbReference type="Pfam" id="PF17807">
    <property type="entry name" value="zf-UBP_var"/>
    <property type="match status" value="1"/>
</dbReference>
<dbReference type="PIRSF" id="PIRSF016308">
    <property type="entry name" value="UBP"/>
    <property type="match status" value="1"/>
</dbReference>
<dbReference type="SMART" id="SM00165">
    <property type="entry name" value="UBA"/>
    <property type="match status" value="2"/>
</dbReference>
<dbReference type="SMART" id="SM00290">
    <property type="entry name" value="ZnF_UBP"/>
    <property type="match status" value="1"/>
</dbReference>
<dbReference type="SUPFAM" id="SSF54001">
    <property type="entry name" value="Cysteine proteinases"/>
    <property type="match status" value="1"/>
</dbReference>
<dbReference type="SUPFAM" id="SSF57850">
    <property type="entry name" value="RING/U-box"/>
    <property type="match status" value="1"/>
</dbReference>
<dbReference type="SUPFAM" id="SSF46934">
    <property type="entry name" value="UBA-like"/>
    <property type="match status" value="1"/>
</dbReference>
<dbReference type="PROSITE" id="PS50030">
    <property type="entry name" value="UBA"/>
    <property type="match status" value="2"/>
</dbReference>
<dbReference type="PROSITE" id="PS00972">
    <property type="entry name" value="USP_1"/>
    <property type="match status" value="1"/>
</dbReference>
<dbReference type="PROSITE" id="PS00973">
    <property type="entry name" value="USP_2"/>
    <property type="match status" value="1"/>
</dbReference>
<dbReference type="PROSITE" id="PS50235">
    <property type="entry name" value="USP_3"/>
    <property type="match status" value="1"/>
</dbReference>
<dbReference type="PROSITE" id="PS50271">
    <property type="entry name" value="ZF_UBP"/>
    <property type="match status" value="1"/>
</dbReference>
<feature type="initiator methionine" description="Removed" evidence="2">
    <location>
        <position position="1"/>
    </location>
</feature>
<feature type="chain" id="PRO_0000080624" description="Ubiquitin carboxyl-terminal hydrolase 5">
    <location>
        <begin position="2"/>
        <end position="858"/>
    </location>
</feature>
<feature type="domain" description="USP">
    <location>
        <begin position="326"/>
        <end position="856"/>
    </location>
</feature>
<feature type="domain" description="UBA 1" evidence="3">
    <location>
        <begin position="654"/>
        <end position="695"/>
    </location>
</feature>
<feature type="domain" description="UBA 2" evidence="3">
    <location>
        <begin position="722"/>
        <end position="762"/>
    </location>
</feature>
<feature type="zinc finger region" description="UBP-type; degenerate" evidence="4">
    <location>
        <begin position="175"/>
        <end position="283"/>
    </location>
</feature>
<feature type="region of interest" description="Disordered" evidence="7">
    <location>
        <begin position="73"/>
        <end position="98"/>
    </location>
</feature>
<feature type="active site" description="Nucleophile" evidence="5 6">
    <location>
        <position position="335"/>
    </location>
</feature>
<feature type="active site" description="Proton acceptor" evidence="5 6">
    <location>
        <position position="818"/>
    </location>
</feature>
<feature type="binding site" evidence="4">
    <location>
        <position position="199"/>
    </location>
    <ligand>
        <name>Zn(2+)</name>
        <dbReference type="ChEBI" id="CHEBI:29105"/>
    </ligand>
</feature>
<feature type="binding site" evidence="4">
    <location>
        <position position="202"/>
    </location>
    <ligand>
        <name>Zn(2+)</name>
        <dbReference type="ChEBI" id="CHEBI:29105"/>
    </ligand>
</feature>
<feature type="binding site" evidence="1">
    <location>
        <position position="209"/>
    </location>
    <ligand>
        <name>substrate</name>
    </ligand>
</feature>
<feature type="binding site" evidence="4">
    <location>
        <position position="219"/>
    </location>
    <ligand>
        <name>Zn(2+)</name>
        <dbReference type="ChEBI" id="CHEBI:29105"/>
    </ligand>
</feature>
<feature type="binding site" evidence="1">
    <location>
        <begin position="221"/>
        <end position="224"/>
    </location>
    <ligand>
        <name>substrate</name>
    </ligand>
</feature>
<feature type="binding site" evidence="4">
    <location>
        <position position="232"/>
    </location>
    <ligand>
        <name>Zn(2+)</name>
        <dbReference type="ChEBI" id="CHEBI:29105"/>
    </ligand>
</feature>
<feature type="binding site" evidence="1">
    <location>
        <position position="259"/>
    </location>
    <ligand>
        <name>substrate</name>
    </ligand>
</feature>
<feature type="binding site" evidence="1">
    <location>
        <position position="261"/>
    </location>
    <ligand>
        <name>substrate</name>
    </ligand>
</feature>
<feature type="binding site" evidence="1">
    <location>
        <position position="264"/>
    </location>
    <ligand>
        <name>substrate</name>
    </ligand>
</feature>
<feature type="modified residue" description="N-acetylalanine" evidence="2">
    <location>
        <position position="2"/>
    </location>
</feature>
<feature type="modified residue" description="Phosphoserine" evidence="2">
    <location>
        <position position="149"/>
    </location>
</feature>
<feature type="modified residue" description="Phosphoserine" evidence="2">
    <location>
        <position position="156"/>
    </location>
</feature>
<feature type="modified residue" description="Phosphothreonine" evidence="2">
    <location>
        <position position="292"/>
    </location>
</feature>
<feature type="modified residue" description="Phosphothreonine" evidence="12 13">
    <location>
        <position position="623"/>
    </location>
</feature>
<feature type="modified residue" description="Phosphoserine" evidence="13">
    <location>
        <position position="779"/>
    </location>
</feature>
<feature type="modified residue" description="Phosphoserine" evidence="13">
    <location>
        <position position="783"/>
    </location>
</feature>
<feature type="modified residue" description="Phosphoserine" evidence="2">
    <location>
        <position position="785"/>
    </location>
</feature>
<feature type="disulfide bond" evidence="1">
    <location>
        <begin position="195"/>
        <end position="816"/>
    </location>
</feature>
<feature type="cross-link" description="Glycyl lysine isopeptide (Lys-Gly) (interchain with G-Cter in SUMO)" evidence="9">
    <location>
        <position position="113"/>
    </location>
</feature>
<feature type="mutagenesis site" description="Enhanced interaction with CACNA1H and consequently its deubiquitination." evidence="9">
    <original>K</original>
    <variation>R</variation>
    <location>
        <position position="113"/>
    </location>
</feature>
<proteinExistence type="evidence at protein level"/>
<comment type="function">
    <text evidence="2 9 10">Deubiquitinating enzyme that participates in a wide range of cellular processes by specifically cleaving isopeptide bonds between ubiquitin and substrate proteins or ubiquitin itself. Affects thereby important cellular signaling pathways such as NF-kappa-B, Wnt/beta-catenin, and cytokine production by regulating ubiquitin-dependent protein degradation. Participates in the activation of the Wnt signaling pathway by promoting FOXM1 deubiquitination and stabilization that induces the recruitment of beta-catenin to Wnt target gene promoter. Regulates the assembly and disassembly of heat-induced stress granules by mediating the hydrolysis of unanchored ubiquitin chains. Promotes lipopolysaccharide-induced apoptosis and inflammatory response by stabilizing the TXNIP protein. Affects T-cell biology by stabilizing the inhibitory receptor on T-cells PDC1 (PubMed:37208329). Acts as a negative regulator of autophagy by regulating ULK1 at both protein and mRNA levels. Acts also as a negative regulator of type I interferon production by simultaneously removing both 'Lys-48'-linked unanchored and 'Lys-63'-linked anchored polyubiquitin chains on the transcription factor IRF3. Modulates the stability of DNA mismatch repair protein MLH1 and counteracts the effect of the ubiquitin ligase UBR4. Upon activation by insulin, it gets phosphorylated through mTORC1-mediated phosphorylation to enhance YTHDF1 stability by removing 'Lys-11'-linked polyubiquitination (By similarity). May also deubiquitinate other substrates such as the calcium channel CACNA1H (PubMed:31455361).</text>
</comment>
<comment type="catalytic activity">
    <reaction evidence="2">
        <text>Thiol-dependent hydrolysis of ester, thioester, amide, peptide and isopeptide bonds formed by the C-terminal Gly of ubiquitin (a 76-residue protein attached to proteins as an intracellular targeting signal).</text>
        <dbReference type="EC" id="3.4.19.12"/>
    </reaction>
</comment>
<comment type="subunit">
    <text evidence="2 8">Homodimer (By similarity). Interacts with TRIML1 (PubMed:19156909).</text>
</comment>
<comment type="subcellular location">
    <subcellularLocation>
        <location evidence="2">Cytoplasm</location>
    </subcellularLocation>
    <subcellularLocation>
        <location evidence="2">Cytoplasm</location>
        <location evidence="2">Stress granule</location>
    </subcellularLocation>
    <subcellularLocation>
        <location evidence="2">Nucleus</location>
    </subcellularLocation>
</comment>
<comment type="PTM">
    <text evidence="9">SUMOylated at Lys-113; SUMOylation affects the interaction with Cav3.2 channels.</text>
</comment>
<comment type="PTM">
    <text evidence="2">Ubiquitinated by SMURF1; leading to proteasomal degradation.</text>
</comment>
<comment type="disruption phenotype">
    <text evidence="10">Conditional knockout of usp5 in T-cells increases the production of effector cytokines and retards tumor growth.</text>
</comment>
<comment type="similarity">
    <text evidence="11">Belongs to the peptidase C19 family.</text>
</comment>
<name>UBP5_MOUSE</name>
<evidence type="ECO:0000250" key="1"/>
<evidence type="ECO:0000250" key="2">
    <source>
        <dbReference type="UniProtKB" id="P45974"/>
    </source>
</evidence>
<evidence type="ECO:0000255" key="3">
    <source>
        <dbReference type="PROSITE-ProRule" id="PRU00212"/>
    </source>
</evidence>
<evidence type="ECO:0000255" key="4">
    <source>
        <dbReference type="PROSITE-ProRule" id="PRU00502"/>
    </source>
</evidence>
<evidence type="ECO:0000255" key="5">
    <source>
        <dbReference type="PROSITE-ProRule" id="PRU10092"/>
    </source>
</evidence>
<evidence type="ECO:0000255" key="6">
    <source>
        <dbReference type="PROSITE-ProRule" id="PRU10093"/>
    </source>
</evidence>
<evidence type="ECO:0000256" key="7">
    <source>
        <dbReference type="SAM" id="MobiDB-lite"/>
    </source>
</evidence>
<evidence type="ECO:0000269" key="8">
    <source>
    </source>
</evidence>
<evidence type="ECO:0000269" key="9">
    <source>
    </source>
</evidence>
<evidence type="ECO:0000269" key="10">
    <source>
    </source>
</evidence>
<evidence type="ECO:0000305" key="11"/>
<evidence type="ECO:0007744" key="12">
    <source>
    </source>
</evidence>
<evidence type="ECO:0007744" key="13">
    <source>
    </source>
</evidence>
<gene>
    <name type="primary">Usp5</name>
    <name type="synonym">Isot</name>
</gene>
<sequence>MAELSEEALLSVLPTIRVPKAGDRVHKDECAFSFDTPESEGGLYICMNTFLGFGKQYVERHFNKTGQRVYLHLRRTRRPKEEDTSAGTGDPPRKKPTRLAIGVEGGFDLTEDKFEFDEDVKIVILPDYLEIARDGLGGLPDIVRDRVTSAVEALLSADSASRKQEVQAWDGEVRQVSKHAFNLKQLDNPARIPPCGWKCSKCDMRENLWLNLTDGSILCGRRYFDGSGGNNHAVEHYRETGYPLAVKLGTITPDGADVYSYDEDDMVLDPSLAEHLSHFGIDMLKMQKTDKTMTELEIDMNQRIGEWELIQESGVPLKPLFGPGYTGIRNLGNSCYLNSVVQVLFSIPDFQRKYVDKLEKIFQNAPTDPTQDFSTQVAKLGHGLLSGEYSKPALESGDGEQVPEQKEVQDGIAPRMFKALIGKGHPEFSTNRQQDAQEFFLHLINMVERNCRSSENPNEVFRFLVEEKIKCLATEKVKYTQRVDYIMQLPVPMDAALNKEELLEYEEKKRQAEEEKVPLPELVRAQVPFSSCLEAYGAPEQVDDFWSTALQAKSVAVKTTRFASFPDYLVIQIKKFTFGLDWVPKKLDVSIEMPEELDISQLRGTGLQPGEEELPDIAPPLVTPDEPKGSLGFYGNEDEDSFCSPHFSSPTSPMLDESVIIQLVEMGFPMDACRKAVYYTGNSGAEAAMNWVMSHMDDPDFANPLILPGSSGPGSTSAAADPPPEDCVTTIVSMGFSRDQALKALRATNNSLERAVDWIFSHIDDLDAEAAMDISEGRSAAESISESVPVGPKVRDGPGKYQLFAFISHMGTSTMCGHYVCHIKKEGRWVIYNDQKVCASEKPPKDLGYIYFYQRVVS</sequence>
<keyword id="KW-0007">Acetylation</keyword>
<keyword id="KW-0963">Cytoplasm</keyword>
<keyword id="KW-1015">Disulfide bond</keyword>
<keyword id="KW-0378">Hydrolase</keyword>
<keyword id="KW-1017">Isopeptide bond</keyword>
<keyword id="KW-0479">Metal-binding</keyword>
<keyword id="KW-0539">Nucleus</keyword>
<keyword id="KW-0597">Phosphoprotein</keyword>
<keyword id="KW-0645">Protease</keyword>
<keyword id="KW-1185">Reference proteome</keyword>
<keyword id="KW-0677">Repeat</keyword>
<keyword id="KW-0788">Thiol protease</keyword>
<keyword id="KW-0832">Ubl conjugation</keyword>
<keyword id="KW-0833">Ubl conjugation pathway</keyword>
<keyword id="KW-0862">Zinc</keyword>
<keyword id="KW-0863">Zinc-finger</keyword>
<organism>
    <name type="scientific">Mus musculus</name>
    <name type="common">Mouse</name>
    <dbReference type="NCBI Taxonomy" id="10090"/>
    <lineage>
        <taxon>Eukaryota</taxon>
        <taxon>Metazoa</taxon>
        <taxon>Chordata</taxon>
        <taxon>Craniata</taxon>
        <taxon>Vertebrata</taxon>
        <taxon>Euteleostomi</taxon>
        <taxon>Mammalia</taxon>
        <taxon>Eutheria</taxon>
        <taxon>Euarchontoglires</taxon>
        <taxon>Glires</taxon>
        <taxon>Rodentia</taxon>
        <taxon>Myomorpha</taxon>
        <taxon>Muroidea</taxon>
        <taxon>Muridae</taxon>
        <taxon>Murinae</taxon>
        <taxon>Mus</taxon>
        <taxon>Mus</taxon>
    </lineage>
</organism>
<reference key="1">
    <citation type="journal article" date="2009" name="PLoS Biol.">
        <title>Lineage-specific biology revealed by a finished genome assembly of the mouse.</title>
        <authorList>
            <person name="Church D.M."/>
            <person name="Goodstadt L."/>
            <person name="Hillier L.W."/>
            <person name="Zody M.C."/>
            <person name="Goldstein S."/>
            <person name="She X."/>
            <person name="Bult C.J."/>
            <person name="Agarwala R."/>
            <person name="Cherry J.L."/>
            <person name="DiCuccio M."/>
            <person name="Hlavina W."/>
            <person name="Kapustin Y."/>
            <person name="Meric P."/>
            <person name="Maglott D."/>
            <person name="Birtle Z."/>
            <person name="Marques A.C."/>
            <person name="Graves T."/>
            <person name="Zhou S."/>
            <person name="Teague B."/>
            <person name="Potamousis K."/>
            <person name="Churas C."/>
            <person name="Place M."/>
            <person name="Herschleb J."/>
            <person name="Runnheim R."/>
            <person name="Forrest D."/>
            <person name="Amos-Landgraf J."/>
            <person name="Schwartz D.C."/>
            <person name="Cheng Z."/>
            <person name="Lindblad-Toh K."/>
            <person name="Eichler E.E."/>
            <person name="Ponting C.P."/>
        </authorList>
    </citation>
    <scope>NUCLEOTIDE SEQUENCE [LARGE SCALE GENOMIC DNA]</scope>
    <source>
        <strain>C57BL/6J</strain>
    </source>
</reference>
<reference key="2">
    <citation type="journal article" date="2004" name="Genome Res.">
        <title>The status, quality, and expansion of the NIH full-length cDNA project: the Mammalian Gene Collection (MGC).</title>
        <authorList>
            <consortium name="The MGC Project Team"/>
        </authorList>
    </citation>
    <scope>NUCLEOTIDE SEQUENCE [LARGE SCALE MRNA]</scope>
    <source>
        <strain>C57BL/6J</strain>
        <tissue>Brain</tissue>
    </source>
</reference>
<reference key="3">
    <citation type="journal article" date="2004" name="Mol. Cell. Proteomics">
        <title>Phosphoproteomic analysis of the developing mouse brain.</title>
        <authorList>
            <person name="Ballif B.A."/>
            <person name="Villen J."/>
            <person name="Beausoleil S.A."/>
            <person name="Schwartz D."/>
            <person name="Gygi S.P."/>
        </authorList>
    </citation>
    <scope>PHOSPHORYLATION [LARGE SCALE ANALYSIS] AT THR-623</scope>
    <scope>IDENTIFICATION BY MASS SPECTROMETRY [LARGE SCALE ANALYSIS]</scope>
    <source>
        <tissue>Embryonic brain</tissue>
    </source>
</reference>
<reference key="4">
    <citation type="journal article" date="2009" name="Mol. Reprod. Dev.">
        <title>Characterization and potential function of a novel pre-implantation embryo-specific RING finger protein: TRIML1.</title>
        <authorList>
            <person name="Tian L."/>
            <person name="Wu X."/>
            <person name="Lin Y."/>
            <person name="Liu Z."/>
            <person name="Xiong F."/>
            <person name="Han Z."/>
            <person name="Zhou Y."/>
            <person name="Zeng Q."/>
            <person name="Wang Y."/>
            <person name="Deng J."/>
            <person name="Chen H."/>
        </authorList>
    </citation>
    <scope>INTERACTION WITH TRIML1</scope>
</reference>
<reference key="5">
    <citation type="journal article" date="2010" name="Cell">
        <title>A tissue-specific atlas of mouse protein phosphorylation and expression.</title>
        <authorList>
            <person name="Huttlin E.L."/>
            <person name="Jedrychowski M.P."/>
            <person name="Elias J.E."/>
            <person name="Goswami T."/>
            <person name="Rad R."/>
            <person name="Beausoleil S.A."/>
            <person name="Villen J."/>
            <person name="Haas W."/>
            <person name="Sowa M.E."/>
            <person name="Gygi S.P."/>
        </authorList>
    </citation>
    <scope>PHOSPHORYLATION [LARGE SCALE ANALYSIS] AT THR-623; SER-779 AND SER-783</scope>
    <scope>IDENTIFICATION BY MASS SPECTROMETRY [LARGE SCALE ANALYSIS]</scope>
    <source>
        <tissue>Brain</tissue>
        <tissue>Brown adipose tissue</tissue>
        <tissue>Heart</tissue>
        <tissue>Kidney</tissue>
        <tissue>Liver</tissue>
        <tissue>Lung</tissue>
        <tissue>Pancreas</tissue>
        <tissue>Spleen</tissue>
        <tissue>Testis</tissue>
    </source>
</reference>
<reference key="6">
    <citation type="journal article" date="2019" name="Mol. Brain">
        <title>SUMOylation regulates USP5-Cav3.2 calcium channel interactions.</title>
        <authorList>
            <person name="Garcia-Caballero A."/>
            <person name="Zhang F.X."/>
            <person name="Chen L."/>
            <person name="M'Dahoma S."/>
            <person name="Huang J."/>
            <person name="Zamponi G.W."/>
        </authorList>
    </citation>
    <scope>SUMOYLATION AT LYS-113</scope>
    <scope>MUTAGENESIS OF LYS-113</scope>
    <scope>FUNCTION</scope>
</reference>
<reference key="7">
    <citation type="journal article" date="2023" name="Nat. Commun.">
        <title>ERK and USP5 govern PD-1 homeostasis via deubiquitination to modulate tumor immunotherapy.</title>
        <authorList>
            <person name="Xiao X."/>
            <person name="Shi J."/>
            <person name="He C."/>
            <person name="Bu X."/>
            <person name="Sun Y."/>
            <person name="Gao M."/>
            <person name="Xiang B."/>
            <person name="Xiong W."/>
            <person name="Dai P."/>
            <person name="Mao Q."/>
            <person name="Xing X."/>
            <person name="Yao Y."/>
            <person name="Yu H."/>
            <person name="Xu G."/>
            <person name="Li S."/>
            <person name="Ren Y."/>
            <person name="Chen B."/>
            <person name="Jiang C."/>
            <person name="Meng G."/>
            <person name="Lee Y.R."/>
            <person name="Wei W."/>
            <person name="Freeman G.J."/>
            <person name="Xie C."/>
            <person name="Zhang J."/>
        </authorList>
    </citation>
    <scope>FUNCTION</scope>
    <scope>DISRUPTION PHENOTYPE</scope>
</reference>
<accession>P56399</accession>
<protein>
    <recommendedName>
        <fullName>Ubiquitin carboxyl-terminal hydrolase 5</fullName>
        <ecNumber>3.4.19.12</ecNumber>
    </recommendedName>
    <alternativeName>
        <fullName>Deubiquitinating enzyme 5</fullName>
    </alternativeName>
    <alternativeName>
        <fullName>Isopeptidase T</fullName>
    </alternativeName>
    <alternativeName>
        <fullName>Ubiquitin thioesterase 5</fullName>
    </alternativeName>
    <alternativeName>
        <fullName>Ubiquitin-specific-processing protease 5</fullName>
    </alternativeName>
</protein>